<feature type="chain" id="PRO_0000458033" description="Ring protein 4/5">
    <location>
        <begin position="1"/>
        <end position="238"/>
    </location>
</feature>
<feature type="helix" evidence="6">
    <location>
        <begin position="3"/>
        <end position="14"/>
    </location>
</feature>
<feature type="strand" evidence="7">
    <location>
        <begin position="20"/>
        <end position="22"/>
    </location>
</feature>
<feature type="helix" evidence="6">
    <location>
        <begin position="27"/>
        <end position="46"/>
    </location>
</feature>
<feature type="helix" evidence="6">
    <location>
        <begin position="48"/>
        <end position="50"/>
    </location>
</feature>
<feature type="strand" evidence="7">
    <location>
        <begin position="51"/>
        <end position="53"/>
    </location>
</feature>
<feature type="strand" evidence="7">
    <location>
        <begin position="57"/>
        <end position="60"/>
    </location>
</feature>
<feature type="helix" evidence="6">
    <location>
        <begin position="61"/>
        <end position="67"/>
    </location>
</feature>
<feature type="helix" evidence="6">
    <location>
        <begin position="68"/>
        <end position="70"/>
    </location>
</feature>
<feature type="strand" evidence="6">
    <location>
        <begin position="71"/>
        <end position="75"/>
    </location>
</feature>
<feature type="strand" evidence="6">
    <location>
        <begin position="92"/>
        <end position="95"/>
    </location>
</feature>
<feature type="strand" evidence="6">
    <location>
        <begin position="100"/>
        <end position="110"/>
    </location>
</feature>
<feature type="strand" evidence="6">
    <location>
        <begin position="113"/>
        <end position="119"/>
    </location>
</feature>
<feature type="helix" evidence="6">
    <location>
        <begin position="122"/>
        <end position="129"/>
    </location>
</feature>
<feature type="strand" evidence="6">
    <location>
        <begin position="131"/>
        <end position="133"/>
    </location>
</feature>
<feature type="strand" evidence="6">
    <location>
        <begin position="140"/>
        <end position="145"/>
    </location>
</feature>
<feature type="strand" evidence="6">
    <location>
        <begin position="149"/>
        <end position="151"/>
    </location>
</feature>
<feature type="strand" evidence="6">
    <location>
        <begin position="153"/>
        <end position="157"/>
    </location>
</feature>
<feature type="strand" evidence="6">
    <location>
        <begin position="164"/>
        <end position="173"/>
    </location>
</feature>
<feature type="strand" evidence="6">
    <location>
        <begin position="179"/>
        <end position="181"/>
    </location>
</feature>
<feature type="turn" evidence="7">
    <location>
        <begin position="183"/>
        <end position="186"/>
    </location>
</feature>
<feature type="strand" evidence="7">
    <location>
        <begin position="187"/>
        <end position="189"/>
    </location>
</feature>
<feature type="strand" evidence="6">
    <location>
        <begin position="192"/>
        <end position="194"/>
    </location>
</feature>
<feature type="helix" evidence="6">
    <location>
        <begin position="205"/>
        <end position="207"/>
    </location>
</feature>
<feature type="helix" evidence="6">
    <location>
        <begin position="208"/>
        <end position="224"/>
    </location>
</feature>
<feature type="helix" evidence="6">
    <location>
        <begin position="227"/>
        <end position="233"/>
    </location>
</feature>
<feature type="turn" evidence="6">
    <location>
        <begin position="234"/>
        <end position="237"/>
    </location>
</feature>
<gene>
    <name evidence="5" type="ORF">crAss001_34</name>
</gene>
<proteinExistence type="evidence at protein level"/>
<keyword id="KW-0002">3D-structure</keyword>
<keyword id="KW-1185">Reference proteome</keyword>
<keyword id="KW-0946">Virion</keyword>
<evidence type="ECO:0000269" key="1">
    <source>
    </source>
</evidence>
<evidence type="ECO:0000303" key="2">
    <source>
    </source>
</evidence>
<evidence type="ECO:0000303" key="3">
    <source>
    </source>
</evidence>
<evidence type="ECO:0000305" key="4">
    <source>
    </source>
</evidence>
<evidence type="ECO:0000312" key="5">
    <source>
        <dbReference type="EMBL" id="AXQ62677.1"/>
    </source>
</evidence>
<evidence type="ECO:0007829" key="6">
    <source>
        <dbReference type="PDB" id="7QOJ"/>
    </source>
</evidence>
<evidence type="ECO:0007829" key="7">
    <source>
        <dbReference type="PDB" id="7QOK"/>
    </source>
</evidence>
<protein>
    <recommendedName>
        <fullName evidence="3">Ring protein 4/5</fullName>
        <shortName evidence="3">R4</shortName>
    </recommendedName>
    <alternativeName>
        <fullName evidence="2">Gene product 34</fullName>
        <shortName evidence="2">gp34</shortName>
    </alternativeName>
</protein>
<comment type="function">
    <text evidence="1">Forms the tail multi-ring barrel with ring protein 1, ring protein 2 and ring protein 3.</text>
</comment>
<comment type="subunit">
    <text evidence="1">Homododecamer.</text>
</comment>
<comment type="subcellular location">
    <subcellularLocation>
        <location evidence="1">Virion</location>
    </subcellularLocation>
    <text evidence="1">Present in 12 copies in the virion tail (PubMed:37138077). Ring 4 is located at the muzzle end of the tail and forms the 2 last rings (PubMed:37138077).</text>
</comment>
<comment type="miscellaneous">
    <text evidence="1 4">The barrel is composed of five stacked dodecameric ring structures (PubMed:37138077). Rings 4 and 5 are both composed of gp34 (PubMed:37138077). Podoviridae-like phages usually possess only one such ring (Probable). The tail is thus rather long (PubMed:37138077).</text>
</comment>
<dbReference type="EMBL" id="MH675552">
    <property type="protein sequence ID" value="AXQ62677.1"/>
    <property type="molecule type" value="Genomic_DNA"/>
</dbReference>
<dbReference type="PDB" id="7QOJ">
    <property type="method" value="EM"/>
    <property type="resolution" value="3.21 A"/>
    <property type="chains" value="E/F=1-238"/>
</dbReference>
<dbReference type="PDB" id="7QOK">
    <property type="method" value="EM"/>
    <property type="resolution" value="3.38 A"/>
    <property type="chains" value="C/D=1-238"/>
</dbReference>
<dbReference type="PDB" id="7QOL">
    <property type="method" value="EM"/>
    <property type="resolution" value="3.33 A"/>
    <property type="chains" value="E/F/U/V=1-238"/>
</dbReference>
<dbReference type="PDB" id="8CKB">
    <property type="method" value="EM"/>
    <property type="resolution" value="4.39 A"/>
    <property type="chains" value="M001/M002/M003/M004/M005/M006/M007/M008/M009/M010/M012/M013/M016/M017/M018/M019/M020/M021/M022/M023/M024/RP4011/RP4014/RP4015=1-238"/>
</dbReference>
<dbReference type="PDBsum" id="7QOJ"/>
<dbReference type="PDBsum" id="7QOK"/>
<dbReference type="PDBsum" id="7QOL"/>
<dbReference type="PDBsum" id="8CKB"/>
<dbReference type="EMDB" id="EMD-14092"/>
<dbReference type="EMDB" id="EMD-14093"/>
<dbReference type="EMDB" id="EMD-14094"/>
<dbReference type="SMR" id="A0A385DVC3"/>
<dbReference type="Proteomes" id="UP000262320">
    <property type="component" value="Genome"/>
</dbReference>
<dbReference type="GO" id="GO:0044423">
    <property type="term" value="C:virion component"/>
    <property type="evidence" value="ECO:0007669"/>
    <property type="project" value="UniProtKB-KW"/>
</dbReference>
<reference key="1">
    <citation type="journal article" date="2018" name="Nat. Commun.">
        <title>PhiCrAss001 represents the most abundant bacteriophage family in the human gut and infects Bacteroides intestinalis.</title>
        <authorList>
            <person name="Shkoporov A.N."/>
            <person name="Khokhlova E.V."/>
            <person name="Fitzgerald C.B."/>
            <person name="Stockdale S.R."/>
            <person name="Draper L.A."/>
            <person name="Ross R.P."/>
            <person name="Hill C."/>
        </authorList>
    </citation>
    <scope>NUCLEOTIDE SEQUENCE [LARGE SCALE GENOMIC DNA]</scope>
</reference>
<reference key="2">
    <citation type="journal article" date="2023" name="Nature">
        <title>Structural atlas of a human gut crassvirus.</title>
        <authorList>
            <person name="Bayfield O.W."/>
            <person name="Shkoporov A.N."/>
            <person name="Yutin N."/>
            <person name="Khokhlova E.V."/>
            <person name="Smith J.L.R."/>
            <person name="Hawkins D.E.D.P."/>
            <person name="Koonin E.V."/>
            <person name="Hill C."/>
            <person name="Antson A.A."/>
        </authorList>
    </citation>
    <scope>SUBCELLULAR LOCATION</scope>
    <scope>SUBUNIT</scope>
    <scope>INTERACTION WITH RING PROTEIN 3</scope>
</reference>
<organism>
    <name type="scientific">Bacteroides phage crAss001</name>
    <name type="common">Bacteroides phage PhiCrAss001</name>
    <dbReference type="NCBI Taxonomy" id="2301731"/>
    <lineage>
        <taxon>Viruses</taxon>
        <taxon>Duplodnaviria</taxon>
        <taxon>Heunggongvirae</taxon>
        <taxon>Uroviricota</taxon>
        <taxon>Caudoviricetes</taxon>
        <taxon>Crassvirales</taxon>
        <taxon>Steigviridae</taxon>
        <taxon>Asinivirinae</taxon>
        <taxon>Kehishuvirus</taxon>
        <taxon>Kehishuvirus primarius</taxon>
    </lineage>
</organism>
<organismHost>
    <name type="scientific">Bacteroides intestinalis</name>
    <dbReference type="NCBI Taxonomy" id="329854"/>
</organismHost>
<accession>A0A385DVC3</accession>
<name>RING4_BPCA1</name>
<sequence length="238" mass="26656">MNVNEFSNEFDVLYNNIMSNAAPGLNEYEKSVLLTKAQEEIVKNYFEPAGNKYGKGLDDSPKRQIDFSELIKVGEGVLNTSAPTITFDKRAKVYDLPADLFLVINEAVDTNAGTKQIVPISYSDYTRLMSRPYKEPVKYQAWRIITTSINNISVELIVNSNETITDYKVRYIRRPAPIITTNLSSEYGDVTINGVSTVSECELNPIIHSEILQRAVELAKAAYQGDLQASVELGQRSE</sequence>